<keyword id="KW-0147">Chitin-binding</keyword>
<keyword id="KW-0903">Direct protein sequencing</keyword>
<keyword id="KW-1015">Disulfide bond</keyword>
<keyword id="KW-0325">Glycoprotein</keyword>
<keyword id="KW-0677">Repeat</keyword>
<keyword id="KW-0732">Signal</keyword>
<sequence length="356" mass="38711">MKELQITTGCLLLMVAAIGKTSAIYSMSETCEYTPDGFIADPNSCQSYGYCKNNQLVGTGKCPDGYLYNNKLGICDSPANVKCISDSKNACLHATDNSFVADPTNCNGYCYCSNKTATCTTCPEFQLFDSKQIKCVYALEKPECTADSICRLVPNAVYVGNPNECGEYISCFNGIGTEGRCASGYFNKQLGGCQTTNPCLASSPNPDIGLGVIENLADNNFVCQVNGGNPTEEKPVFISDGQTCMGYYKCTSRNGPGIWGKCPKGLHFNEGKCVTPFTFPCTFDRCGNLNREFVGAIRTECKNFLICKNETSQGMAYNYAKYIGLPCTDKNYPFFNEVSGTCEKTSPKSDTYKLCV</sequence>
<dbReference type="EMBL" id="L25106">
    <property type="protein sequence ID" value="AAC37261.1"/>
    <property type="molecule type" value="mRNA"/>
</dbReference>
<dbReference type="SMR" id="Q25255"/>
<dbReference type="OrthoDB" id="6020543at2759"/>
<dbReference type="GO" id="GO:0005576">
    <property type="term" value="C:extracellular region"/>
    <property type="evidence" value="ECO:0007669"/>
    <property type="project" value="InterPro"/>
</dbReference>
<dbReference type="GO" id="GO:0008061">
    <property type="term" value="F:chitin binding"/>
    <property type="evidence" value="ECO:0007669"/>
    <property type="project" value="UniProtKB-KW"/>
</dbReference>
<dbReference type="Gene3D" id="2.170.140.10">
    <property type="entry name" value="Chitin binding domain"/>
    <property type="match status" value="2"/>
</dbReference>
<dbReference type="InterPro" id="IPR002557">
    <property type="entry name" value="Chitin-bd_dom"/>
</dbReference>
<dbReference type="InterPro" id="IPR036508">
    <property type="entry name" value="Chitin-bd_dom_sf"/>
</dbReference>
<dbReference type="InterPro" id="IPR051940">
    <property type="entry name" value="Chitin_bind-dev_reg"/>
</dbReference>
<dbReference type="PANTHER" id="PTHR23301">
    <property type="entry name" value="CHITIN BINDING PERITROPHIN-A"/>
    <property type="match status" value="1"/>
</dbReference>
<dbReference type="PANTHER" id="PTHR23301:SF106">
    <property type="entry name" value="CHITIN-BINDING TYPE-2 DOMAIN-CONTAINING PROTEIN-RELATED"/>
    <property type="match status" value="1"/>
</dbReference>
<dbReference type="Pfam" id="PF01607">
    <property type="entry name" value="CBM_14"/>
    <property type="match status" value="3"/>
</dbReference>
<dbReference type="SMART" id="SM00494">
    <property type="entry name" value="ChtBD2"/>
    <property type="match status" value="4"/>
</dbReference>
<dbReference type="SUPFAM" id="SSF57625">
    <property type="entry name" value="Invertebrate chitin-binding proteins"/>
    <property type="match status" value="4"/>
</dbReference>
<dbReference type="PROSITE" id="PS50940">
    <property type="entry name" value="CHIT_BIND_II"/>
    <property type="match status" value="4"/>
</dbReference>
<feature type="signal peptide" evidence="3">
    <location>
        <begin position="1"/>
        <end position="23"/>
    </location>
</feature>
<feature type="chain" id="PRO_0000023613" description="Peritrophin-44">
    <location>
        <begin position="24"/>
        <end position="356"/>
    </location>
</feature>
<feature type="domain" description="Chitin-binding type-2 1" evidence="2">
    <location>
        <begin position="28"/>
        <end position="85"/>
    </location>
</feature>
<feature type="domain" description="Chitin-binding type-2 2" evidence="2">
    <location>
        <begin position="88"/>
        <end position="146"/>
    </location>
</feature>
<feature type="domain" description="Chitin-binding type-2 3" evidence="2">
    <location>
        <begin position="147"/>
        <end position="201"/>
    </location>
</feature>
<feature type="domain" description="Chitin-binding type-2 4" evidence="2">
    <location>
        <begin position="220"/>
        <end position="283"/>
    </location>
</feature>
<feature type="domain" description="Chitin-binding type-2 5" evidence="2">
    <location>
        <begin position="286"/>
        <end position="355"/>
    </location>
</feature>
<feature type="glycosylation site" description="N-linked (GlcNAc...) asparagine" evidence="1">
    <location>
        <position position="114"/>
    </location>
</feature>
<feature type="glycosylation site" description="N-linked (GlcNAc...) asparagine" evidence="1">
    <location>
        <position position="309"/>
    </location>
</feature>
<feature type="disulfide bond" evidence="2">
    <location>
        <begin position="62"/>
        <end position="75"/>
    </location>
</feature>
<feature type="disulfide bond" evidence="2">
    <location>
        <begin position="122"/>
        <end position="135"/>
    </location>
</feature>
<feature type="disulfide bond" evidence="2">
    <location>
        <begin position="181"/>
        <end position="193"/>
    </location>
</feature>
<feature type="disulfide bond" evidence="2">
    <location>
        <begin position="262"/>
        <end position="273"/>
    </location>
</feature>
<name>PE44_LUCCU</name>
<protein>
    <recommendedName>
        <fullName>Peritrophin-44</fullName>
    </recommendedName>
</protein>
<organism>
    <name type="scientific">Lucilia cuprina</name>
    <name type="common">Green bottle fly</name>
    <name type="synonym">Australian sheep blowfly</name>
    <dbReference type="NCBI Taxonomy" id="7375"/>
    <lineage>
        <taxon>Eukaryota</taxon>
        <taxon>Metazoa</taxon>
        <taxon>Ecdysozoa</taxon>
        <taxon>Arthropoda</taxon>
        <taxon>Hexapoda</taxon>
        <taxon>Insecta</taxon>
        <taxon>Pterygota</taxon>
        <taxon>Neoptera</taxon>
        <taxon>Endopterygota</taxon>
        <taxon>Diptera</taxon>
        <taxon>Brachycera</taxon>
        <taxon>Muscomorpha</taxon>
        <taxon>Oestroidea</taxon>
        <taxon>Calliphoridae</taxon>
        <taxon>Luciliinae</taxon>
        <taxon>Lucilia</taxon>
    </lineage>
</organism>
<reference key="1">
    <citation type="journal article" date="1996" name="J. Biol. Chem.">
        <title>Characterization of a major peritrophic membrane protein, peritrophin-44, from the larvae of Lucilia cuprina. cDNA and deduced amino acid sequences.</title>
        <authorList>
            <person name="Elvin C.M."/>
            <person name="Vuocolo T."/>
            <person name="Pearson R.D."/>
            <person name="East I.J."/>
            <person name="Riding G.A."/>
            <person name="Eisemann C.H."/>
            <person name="Tellam R.L."/>
        </authorList>
    </citation>
    <scope>NUCLEOTIDE SEQUENCE [MRNA]</scope>
    <scope>PROTEIN SEQUENCE OF 24-80; 83-88; 215-232; 254-267; 271-300; 303-308 AND 311-356</scope>
    <scope>TISSUE SPECIFICITY</scope>
    <scope>DEVELOPMENTAL STAGE</scope>
    <source>
        <tissue>Larval peritrophic membrane</tissue>
    </source>
</reference>
<evidence type="ECO:0000255" key="1"/>
<evidence type="ECO:0000255" key="2">
    <source>
        <dbReference type="PROSITE-ProRule" id="PRU00144"/>
    </source>
</evidence>
<evidence type="ECO:0000269" key="3">
    <source>
    </source>
</evidence>
<proteinExistence type="evidence at protein level"/>
<accession>Q25255</accession>
<comment type="function">
    <text>May have roles in the maintenance of peritrophic membrane structure and in the determination of the porosity of the peritrophic membrane. May bind chitin or related oligosaccharide structures.</text>
</comment>
<comment type="tissue specificity">
    <text evidence="3">Larval peritrophic membrane.</text>
</comment>
<comment type="developmental stage">
    <text evidence="3">Expressed in all 3 larval instars and to a very low extent in adults, but not pupae or eggs.</text>
</comment>
<comment type="PTM">
    <text>Glycosylated.</text>
</comment>